<gene>
    <name evidence="1" type="primary">purM</name>
    <name type="ordered locus">Dhaf_1476</name>
</gene>
<reference key="1">
    <citation type="journal article" date="2012" name="BMC Microbiol.">
        <title>Genome sequence of Desulfitobacterium hafniense DCB-2, a Gram-positive anaerobe capable of dehalogenation and metal reduction.</title>
        <authorList>
            <person name="Kim S.H."/>
            <person name="Harzman C."/>
            <person name="Davis J.K."/>
            <person name="Hutcheson R."/>
            <person name="Broderick J.B."/>
            <person name="Marsh T.L."/>
            <person name="Tiedje J.M."/>
        </authorList>
    </citation>
    <scope>NUCLEOTIDE SEQUENCE [LARGE SCALE GENOMIC DNA]</scope>
    <source>
        <strain>DSM 10664 / DCB-2</strain>
    </source>
</reference>
<sequence>MGYSYRQAGVDIDAGNQAVELMKPAVKRTVRPEVMGGLGGFGGLFALDLKKYPEPVLVSGTDGVGTKLKLAFQMNRHDTIGQDAVAMCVNDILVQGAEPLFFLDYLAVGKLVPERVAQVVGGIAKGCELAGCALIGGETAEMPGFYDEGEYDIAGFAVGAVNRPDLIDGSQIQAGDVLIGLPSSGFHSNGYSLVRKIFTPDLWEKNYPELGETLGEALIRPTRIYVKTVLPLIESRKVLGMAHITGGGLTENIPRILPEGLGIKIARSAWQVPALFTLLQRLGEVEEAEMLRTFNMGIGFVLIVHPEDVDFIQTQLQAAGEKCFVLGEVSGQSEGVSYL</sequence>
<accession>B8FP03</accession>
<evidence type="ECO:0000255" key="1">
    <source>
        <dbReference type="HAMAP-Rule" id="MF_00741"/>
    </source>
</evidence>
<proteinExistence type="inferred from homology"/>
<name>PUR5_DESHD</name>
<comment type="catalytic activity">
    <reaction evidence="1">
        <text>2-formamido-N(1)-(5-O-phospho-beta-D-ribosyl)acetamidine + ATP = 5-amino-1-(5-phospho-beta-D-ribosyl)imidazole + ADP + phosphate + H(+)</text>
        <dbReference type="Rhea" id="RHEA:23032"/>
        <dbReference type="ChEBI" id="CHEBI:15378"/>
        <dbReference type="ChEBI" id="CHEBI:30616"/>
        <dbReference type="ChEBI" id="CHEBI:43474"/>
        <dbReference type="ChEBI" id="CHEBI:137981"/>
        <dbReference type="ChEBI" id="CHEBI:147287"/>
        <dbReference type="ChEBI" id="CHEBI:456216"/>
        <dbReference type="EC" id="6.3.3.1"/>
    </reaction>
</comment>
<comment type="pathway">
    <text evidence="1">Purine metabolism; IMP biosynthesis via de novo pathway; 5-amino-1-(5-phospho-D-ribosyl)imidazole from N(2)-formyl-N(1)-(5-phospho-D-ribosyl)glycinamide: step 2/2.</text>
</comment>
<comment type="subcellular location">
    <subcellularLocation>
        <location evidence="1">Cytoplasm</location>
    </subcellularLocation>
</comment>
<comment type="similarity">
    <text evidence="1">Belongs to the AIR synthase family.</text>
</comment>
<organism>
    <name type="scientific">Desulfitobacterium hafniense (strain DSM 10664 / DCB-2)</name>
    <dbReference type="NCBI Taxonomy" id="272564"/>
    <lineage>
        <taxon>Bacteria</taxon>
        <taxon>Bacillati</taxon>
        <taxon>Bacillota</taxon>
        <taxon>Clostridia</taxon>
        <taxon>Eubacteriales</taxon>
        <taxon>Desulfitobacteriaceae</taxon>
        <taxon>Desulfitobacterium</taxon>
    </lineage>
</organism>
<protein>
    <recommendedName>
        <fullName evidence="1">Phosphoribosylformylglycinamidine cyclo-ligase</fullName>
        <ecNumber evidence="1">6.3.3.1</ecNumber>
    </recommendedName>
    <alternativeName>
        <fullName evidence="1">AIR synthase</fullName>
    </alternativeName>
    <alternativeName>
        <fullName evidence="1">AIRS</fullName>
    </alternativeName>
    <alternativeName>
        <fullName evidence="1">Phosphoribosyl-aminoimidazole synthetase</fullName>
    </alternativeName>
</protein>
<keyword id="KW-0067">ATP-binding</keyword>
<keyword id="KW-0963">Cytoplasm</keyword>
<keyword id="KW-0436">Ligase</keyword>
<keyword id="KW-0547">Nucleotide-binding</keyword>
<keyword id="KW-0658">Purine biosynthesis</keyword>
<feature type="chain" id="PRO_1000148278" description="Phosphoribosylformylglycinamidine cyclo-ligase">
    <location>
        <begin position="1"/>
        <end position="339"/>
    </location>
</feature>
<dbReference type="EC" id="6.3.3.1" evidence="1"/>
<dbReference type="EMBL" id="CP001336">
    <property type="protein sequence ID" value="ACL19528.1"/>
    <property type="molecule type" value="Genomic_DNA"/>
</dbReference>
<dbReference type="RefSeq" id="WP_011461474.1">
    <property type="nucleotide sequence ID" value="NC_011830.1"/>
</dbReference>
<dbReference type="SMR" id="B8FP03"/>
<dbReference type="KEGG" id="dhd:Dhaf_1476"/>
<dbReference type="HOGENOM" id="CLU_047116_0_0_9"/>
<dbReference type="UniPathway" id="UPA00074">
    <property type="reaction ID" value="UER00129"/>
</dbReference>
<dbReference type="Proteomes" id="UP000007726">
    <property type="component" value="Chromosome"/>
</dbReference>
<dbReference type="GO" id="GO:0005829">
    <property type="term" value="C:cytosol"/>
    <property type="evidence" value="ECO:0007669"/>
    <property type="project" value="TreeGrafter"/>
</dbReference>
<dbReference type="GO" id="GO:0005524">
    <property type="term" value="F:ATP binding"/>
    <property type="evidence" value="ECO:0007669"/>
    <property type="project" value="UniProtKB-KW"/>
</dbReference>
<dbReference type="GO" id="GO:0004637">
    <property type="term" value="F:phosphoribosylamine-glycine ligase activity"/>
    <property type="evidence" value="ECO:0007669"/>
    <property type="project" value="TreeGrafter"/>
</dbReference>
<dbReference type="GO" id="GO:0004641">
    <property type="term" value="F:phosphoribosylformylglycinamidine cyclo-ligase activity"/>
    <property type="evidence" value="ECO:0007669"/>
    <property type="project" value="UniProtKB-UniRule"/>
</dbReference>
<dbReference type="GO" id="GO:0006189">
    <property type="term" value="P:'de novo' IMP biosynthetic process"/>
    <property type="evidence" value="ECO:0007669"/>
    <property type="project" value="UniProtKB-UniRule"/>
</dbReference>
<dbReference type="GO" id="GO:0046084">
    <property type="term" value="P:adenine biosynthetic process"/>
    <property type="evidence" value="ECO:0007669"/>
    <property type="project" value="TreeGrafter"/>
</dbReference>
<dbReference type="CDD" id="cd02196">
    <property type="entry name" value="PurM"/>
    <property type="match status" value="1"/>
</dbReference>
<dbReference type="FunFam" id="3.30.1330.10:FF:000001">
    <property type="entry name" value="Phosphoribosylformylglycinamidine cyclo-ligase"/>
    <property type="match status" value="1"/>
</dbReference>
<dbReference type="FunFam" id="3.90.650.10:FF:000001">
    <property type="entry name" value="Phosphoribosylformylglycinamidine cyclo-ligase"/>
    <property type="match status" value="1"/>
</dbReference>
<dbReference type="Gene3D" id="3.90.650.10">
    <property type="entry name" value="PurM-like C-terminal domain"/>
    <property type="match status" value="1"/>
</dbReference>
<dbReference type="Gene3D" id="3.30.1330.10">
    <property type="entry name" value="PurM-like, N-terminal domain"/>
    <property type="match status" value="1"/>
</dbReference>
<dbReference type="HAMAP" id="MF_00741">
    <property type="entry name" value="AIRS"/>
    <property type="match status" value="1"/>
</dbReference>
<dbReference type="InterPro" id="IPR010918">
    <property type="entry name" value="PurM-like_C_dom"/>
</dbReference>
<dbReference type="InterPro" id="IPR036676">
    <property type="entry name" value="PurM-like_C_sf"/>
</dbReference>
<dbReference type="InterPro" id="IPR016188">
    <property type="entry name" value="PurM-like_N"/>
</dbReference>
<dbReference type="InterPro" id="IPR036921">
    <property type="entry name" value="PurM-like_N_sf"/>
</dbReference>
<dbReference type="InterPro" id="IPR004733">
    <property type="entry name" value="PurM_cligase"/>
</dbReference>
<dbReference type="NCBIfam" id="TIGR00878">
    <property type="entry name" value="purM"/>
    <property type="match status" value="1"/>
</dbReference>
<dbReference type="PANTHER" id="PTHR10520:SF12">
    <property type="entry name" value="TRIFUNCTIONAL PURINE BIOSYNTHETIC PROTEIN ADENOSINE-3"/>
    <property type="match status" value="1"/>
</dbReference>
<dbReference type="PANTHER" id="PTHR10520">
    <property type="entry name" value="TRIFUNCTIONAL PURINE BIOSYNTHETIC PROTEIN ADENOSINE-3-RELATED"/>
    <property type="match status" value="1"/>
</dbReference>
<dbReference type="Pfam" id="PF00586">
    <property type="entry name" value="AIRS"/>
    <property type="match status" value="1"/>
</dbReference>
<dbReference type="Pfam" id="PF02769">
    <property type="entry name" value="AIRS_C"/>
    <property type="match status" value="1"/>
</dbReference>
<dbReference type="SUPFAM" id="SSF56042">
    <property type="entry name" value="PurM C-terminal domain-like"/>
    <property type="match status" value="1"/>
</dbReference>
<dbReference type="SUPFAM" id="SSF55326">
    <property type="entry name" value="PurM N-terminal domain-like"/>
    <property type="match status" value="1"/>
</dbReference>